<reference key="1">
    <citation type="journal article" date="2009" name="J. Bacteriol.">
        <title>The complete genome sequence of Helicobacter pylori strain G27.</title>
        <authorList>
            <person name="Baltrus D.A."/>
            <person name="Amieva M.R."/>
            <person name="Covacci A."/>
            <person name="Lowe T.M."/>
            <person name="Merrell D.S."/>
            <person name="Ottemann K.M."/>
            <person name="Stein M."/>
            <person name="Salama N.R."/>
            <person name="Guillemin K."/>
        </authorList>
    </citation>
    <scope>NUCLEOTIDE SEQUENCE [LARGE SCALE GENOMIC DNA]</scope>
    <source>
        <strain>G27</strain>
    </source>
</reference>
<feature type="chain" id="PRO_1000132662" description="Flagellar hook-basal body complex protein FliE">
    <location>
        <begin position="1"/>
        <end position="109"/>
    </location>
</feature>
<feature type="region of interest" description="Disordered" evidence="2">
    <location>
        <begin position="1"/>
        <end position="38"/>
    </location>
</feature>
<feature type="compositionally biased region" description="Basic and acidic residues" evidence="2">
    <location>
        <begin position="19"/>
        <end position="38"/>
    </location>
</feature>
<gene>
    <name evidence="1" type="primary">fliE</name>
    <name type="ordered locus">HPG27_1495</name>
</gene>
<proteinExistence type="inferred from homology"/>
<evidence type="ECO:0000255" key="1">
    <source>
        <dbReference type="HAMAP-Rule" id="MF_00724"/>
    </source>
</evidence>
<evidence type="ECO:0000256" key="2">
    <source>
        <dbReference type="SAM" id="MobiDB-lite"/>
    </source>
</evidence>
<sequence>MQAIHNDKSLLSPFSELNTDNRTKREESGNAFKEQKGGEFSKLLKQSINELNNTQEQSDKALADMATGQIKDLHQAAIAIGKAETSMKLMLEVRNKAISAYKELLRTQI</sequence>
<dbReference type="EMBL" id="CP001173">
    <property type="protein sequence ID" value="ACI28237.1"/>
    <property type="molecule type" value="Genomic_DNA"/>
</dbReference>
<dbReference type="RefSeq" id="WP_001147916.1">
    <property type="nucleotide sequence ID" value="NC_011333.1"/>
</dbReference>
<dbReference type="SMR" id="B5Z9I8"/>
<dbReference type="KEGG" id="hpg:HPG27_1495"/>
<dbReference type="HOGENOM" id="CLU_147249_3_1_7"/>
<dbReference type="Proteomes" id="UP000001735">
    <property type="component" value="Chromosome"/>
</dbReference>
<dbReference type="GO" id="GO:0009425">
    <property type="term" value="C:bacterial-type flagellum basal body"/>
    <property type="evidence" value="ECO:0007669"/>
    <property type="project" value="UniProtKB-SubCell"/>
</dbReference>
<dbReference type="GO" id="GO:0003774">
    <property type="term" value="F:cytoskeletal motor activity"/>
    <property type="evidence" value="ECO:0007669"/>
    <property type="project" value="InterPro"/>
</dbReference>
<dbReference type="GO" id="GO:0005198">
    <property type="term" value="F:structural molecule activity"/>
    <property type="evidence" value="ECO:0007669"/>
    <property type="project" value="InterPro"/>
</dbReference>
<dbReference type="GO" id="GO:0071973">
    <property type="term" value="P:bacterial-type flagellum-dependent cell motility"/>
    <property type="evidence" value="ECO:0007669"/>
    <property type="project" value="InterPro"/>
</dbReference>
<dbReference type="HAMAP" id="MF_00724">
    <property type="entry name" value="FliE"/>
    <property type="match status" value="1"/>
</dbReference>
<dbReference type="InterPro" id="IPR001624">
    <property type="entry name" value="FliE"/>
</dbReference>
<dbReference type="NCBIfam" id="TIGR00205">
    <property type="entry name" value="fliE"/>
    <property type="match status" value="1"/>
</dbReference>
<dbReference type="PANTHER" id="PTHR34653">
    <property type="match status" value="1"/>
</dbReference>
<dbReference type="PANTHER" id="PTHR34653:SF1">
    <property type="entry name" value="FLAGELLAR HOOK-BASAL BODY COMPLEX PROTEIN FLIE"/>
    <property type="match status" value="1"/>
</dbReference>
<dbReference type="Pfam" id="PF02049">
    <property type="entry name" value="FliE"/>
    <property type="match status" value="1"/>
</dbReference>
<dbReference type="PRINTS" id="PR01006">
    <property type="entry name" value="FLGHOOKFLIE"/>
</dbReference>
<comment type="subcellular location">
    <subcellularLocation>
        <location evidence="1">Bacterial flagellum basal body</location>
    </subcellularLocation>
</comment>
<comment type="similarity">
    <text evidence="1">Belongs to the FliE family.</text>
</comment>
<accession>B5Z9I8</accession>
<protein>
    <recommendedName>
        <fullName evidence="1">Flagellar hook-basal body complex protein FliE</fullName>
    </recommendedName>
</protein>
<name>FLIE_HELPG</name>
<keyword id="KW-0975">Bacterial flagellum</keyword>
<keyword id="KW-1185">Reference proteome</keyword>
<organism>
    <name type="scientific">Helicobacter pylori (strain G27)</name>
    <dbReference type="NCBI Taxonomy" id="563041"/>
    <lineage>
        <taxon>Bacteria</taxon>
        <taxon>Pseudomonadati</taxon>
        <taxon>Campylobacterota</taxon>
        <taxon>Epsilonproteobacteria</taxon>
        <taxon>Campylobacterales</taxon>
        <taxon>Helicobacteraceae</taxon>
        <taxon>Helicobacter</taxon>
    </lineage>
</organism>